<dbReference type="EC" id="1.5.1.24"/>
<dbReference type="EMBL" id="U23376">
    <property type="protein sequence ID" value="AAA86385.1"/>
    <property type="molecule type" value="Genomic_DNA"/>
</dbReference>
<dbReference type="PIR" id="A57499">
    <property type="entry name" value="A57499"/>
</dbReference>
<dbReference type="SMR" id="P15244"/>
<dbReference type="SABIO-RK" id="P15244"/>
<dbReference type="GO" id="GO:0005886">
    <property type="term" value="C:plasma membrane"/>
    <property type="evidence" value="ECO:0007669"/>
    <property type="project" value="TreeGrafter"/>
</dbReference>
<dbReference type="GO" id="GO:0000286">
    <property type="term" value="F:alanine dehydrogenase activity"/>
    <property type="evidence" value="ECO:0007669"/>
    <property type="project" value="TreeGrafter"/>
</dbReference>
<dbReference type="GO" id="GO:0047126">
    <property type="term" value="F:N5-(carboxyethyl)ornithine synthase activity"/>
    <property type="evidence" value="ECO:0000314"/>
    <property type="project" value="UniProtKB"/>
</dbReference>
<dbReference type="GO" id="GO:0006524">
    <property type="term" value="P:alanine catabolic process"/>
    <property type="evidence" value="ECO:0007669"/>
    <property type="project" value="TreeGrafter"/>
</dbReference>
<dbReference type="GO" id="GO:0006591">
    <property type="term" value="P:ornithine metabolic process"/>
    <property type="evidence" value="ECO:0000314"/>
    <property type="project" value="UniProtKB"/>
</dbReference>
<dbReference type="CDD" id="cd12181">
    <property type="entry name" value="ceo_syn"/>
    <property type="match status" value="1"/>
</dbReference>
<dbReference type="FunFam" id="3.40.50.720:FF:000489">
    <property type="entry name" value="N(5)-(Carboxyethyl)ornithine synthase"/>
    <property type="match status" value="1"/>
</dbReference>
<dbReference type="FunFam" id="3.40.50.720:FF:000488">
    <property type="entry name" value="N5-(Carboxyethyl)ornithine synthase"/>
    <property type="match status" value="1"/>
</dbReference>
<dbReference type="Gene3D" id="3.40.50.720">
    <property type="entry name" value="NAD(P)-binding Rossmann-like Domain"/>
    <property type="match status" value="2"/>
</dbReference>
<dbReference type="InterPro" id="IPR007886">
    <property type="entry name" value="AlaDH/PNT_N"/>
</dbReference>
<dbReference type="InterPro" id="IPR007698">
    <property type="entry name" value="AlaDH/PNT_NAD(H)-bd"/>
</dbReference>
<dbReference type="InterPro" id="IPR046951">
    <property type="entry name" value="CEOS"/>
</dbReference>
<dbReference type="InterPro" id="IPR036291">
    <property type="entry name" value="NAD(P)-bd_dom_sf"/>
</dbReference>
<dbReference type="PANTHER" id="PTHR42795">
    <property type="entry name" value="ALANINE DEHYDROGENASE"/>
    <property type="match status" value="1"/>
</dbReference>
<dbReference type="PANTHER" id="PTHR42795:SF1">
    <property type="entry name" value="ALANINE DEHYDROGENASE"/>
    <property type="match status" value="1"/>
</dbReference>
<dbReference type="Pfam" id="PF01262">
    <property type="entry name" value="AlaDh_PNT_C"/>
    <property type="match status" value="1"/>
</dbReference>
<dbReference type="Pfam" id="PF05222">
    <property type="entry name" value="AlaDh_PNT_N"/>
    <property type="match status" value="1"/>
</dbReference>
<dbReference type="SMART" id="SM01002">
    <property type="entry name" value="AlaDh_PNT_C"/>
    <property type="match status" value="1"/>
</dbReference>
<dbReference type="SMART" id="SM01003">
    <property type="entry name" value="AlaDh_PNT_N"/>
    <property type="match status" value="1"/>
</dbReference>
<dbReference type="SUPFAM" id="SSF52283">
    <property type="entry name" value="Formate/glycerate dehydrogenase catalytic domain-like"/>
    <property type="match status" value="1"/>
</dbReference>
<dbReference type="SUPFAM" id="SSF51735">
    <property type="entry name" value="NAD(P)-binding Rossmann-fold domains"/>
    <property type="match status" value="1"/>
</dbReference>
<evidence type="ECO:0000250" key="1"/>
<evidence type="ECO:0000255" key="2"/>
<evidence type="ECO:0000269" key="3">
    <source>
    </source>
</evidence>
<evidence type="ECO:0000269" key="4">
    <source>
    </source>
</evidence>
<evidence type="ECO:0000269" key="5">
    <source>
    </source>
</evidence>
<evidence type="ECO:0000305" key="6"/>
<keyword id="KW-0903">Direct protein sequencing</keyword>
<keyword id="KW-0521">NADP</keyword>
<keyword id="KW-0560">Oxidoreductase</keyword>
<gene>
    <name type="primary">ceo</name>
</gene>
<comment type="function">
    <text evidence="4">Catalyzes the NADPH-dependent reductive condensation between pyruvic acid and the side chain amino group of L-ornithine to form N(5)-(L-1-carboxyethyl)-L-ornithine. To a lesser extent, can also use L-lysine as substrate (yielding N(6)-(L-1-carboxyethyl)-L-lysine). NADH cannot replace NADPH in the condensation reaction.</text>
</comment>
<comment type="catalytic activity">
    <reaction evidence="4">
        <text>N(5)-[1(S)-1-carboxyethyl]-L-ornithine + NADP(+) + H2O = L-ornithine + pyruvate + NADPH + H(+)</text>
        <dbReference type="Rhea" id="RHEA:18661"/>
        <dbReference type="ChEBI" id="CHEBI:15361"/>
        <dbReference type="ChEBI" id="CHEBI:15377"/>
        <dbReference type="ChEBI" id="CHEBI:15378"/>
        <dbReference type="ChEBI" id="CHEBI:46911"/>
        <dbReference type="ChEBI" id="CHEBI:57783"/>
        <dbReference type="ChEBI" id="CHEBI:57889"/>
        <dbReference type="ChEBI" id="CHEBI:58349"/>
        <dbReference type="EC" id="1.5.1.24"/>
    </reaction>
</comment>
<comment type="activity regulation">
    <text evidence="4">Is potently inhibited by the reaction product N(5)-(L-1-carboxyethyl)-L-ornithine.</text>
</comment>
<comment type="biophysicochemical properties">
    <kinetics>
        <KM evidence="4">3.3 mM for L-ornithine</KM>
        <KM evidence="4">18.2 mM for L-lysine</KM>
        <KM evidence="4">150 uM for pyruvate</KM>
        <KM evidence="4">6.6 uM for NADPH</KM>
        <Vmax evidence="4">7.9 umol/min/mg enzyme with L-ornithine as substrate</Vmax>
        <Vmax evidence="4">5.9 umol/min/mg enzyme with L-lysine as substrate</Vmax>
    </kinetics>
    <phDependence>
        <text evidence="4">Optimum pH is 8.0. Active over a broad pH range of 6.5-9.0.</text>
    </phDependence>
    <temperatureDependence>
        <text evidence="4">Stable to heating at 50 degrees Celsius for 10 minutes. Rapidly inactivated by heating at 60 degrees Celsius.</text>
    </temperatureDependence>
</comment>
<comment type="subunit">
    <text evidence="3">Homotetramer.</text>
</comment>
<comment type="mass spectrometry" mass="35355.0" method="MALDI" evidence="3"/>
<comment type="miscellaneous">
    <text>No enzyme activity is detectable in the reverse direction with NADP(+) and chemically synthesized N(5)-(L-1-carboxyethyl)-L-ornithine as potential substrates.</text>
</comment>
<comment type="similarity">
    <text evidence="6">Belongs to the AlaDH/PNT family. CEOS subfamily.</text>
</comment>
<name>CEO2_LACLL</name>
<feature type="chain" id="PRO_0000089483" description="N(5)-(carboxyethyl)ornithine synthase">
    <location>
        <begin position="1"/>
        <end position="313"/>
    </location>
</feature>
<feature type="binding site" evidence="1">
    <location>
        <position position="15"/>
    </location>
    <ligand>
        <name>pyruvate</name>
        <dbReference type="ChEBI" id="CHEBI:15361"/>
    </ligand>
</feature>
<feature type="binding site" evidence="1">
    <location>
        <position position="71"/>
    </location>
    <ligand>
        <name>pyruvate</name>
        <dbReference type="ChEBI" id="CHEBI:15361"/>
    </ligand>
</feature>
<feature type="binding site" evidence="1">
    <location>
        <position position="92"/>
    </location>
    <ligand>
        <name>pyruvate</name>
        <dbReference type="ChEBI" id="CHEBI:15361"/>
    </ligand>
</feature>
<feature type="binding site" evidence="2">
    <location>
        <begin position="171"/>
        <end position="176"/>
    </location>
    <ligand>
        <name>NADP(+)</name>
        <dbReference type="ChEBI" id="CHEBI:58349"/>
    </ligand>
</feature>
<feature type="mutagenesis site" description="Loss of activity." evidence="5">
    <original>R</original>
    <variation>K</variation>
    <location>
        <position position="15"/>
    </location>
</feature>
<accession>P15244</accession>
<sequence length="313" mass="35323">MKIGLVKANFPGERRVPLLPKDIKDFKNEILVEEGFGKFLDIDDQEYSDKGCHILSRAEVFAESEAIFSLKLIQPTDYYHLREGQMIIGWTHPFGSGQSFMKEQALPKKLIVVDLDSNSPCIYYENEIFESGIPKGLLYKNSFYAGYAGVLDALLQYGLIPTEETKIAILGSGNVAQGAFSSISKYSSNIRMYYRKTMSIFKENYTKYDIIINGIEIGKDDDPILSFSEQKSLKKGTLIIDVAADAGNTIEGSHFTSIDAPIYENAGKYYYVVPNTPSLIYRNVSQELSKILSENIFRKDCSRFIEKVKPLNK</sequence>
<proteinExistence type="evidence at protein level"/>
<protein>
    <recommendedName>
        <fullName>N(5)-(carboxyethyl)ornithine synthase</fullName>
        <shortName>CEOS</shortName>
        <ecNumber>1.5.1.24</ecNumber>
    </recommendedName>
    <alternativeName>
        <fullName>N(5)-(L-1-carboxyethyl)-L-ornithine:NADP(+) oxidoreductase</fullName>
    </alternativeName>
</protein>
<organism>
    <name type="scientific">Lactococcus lactis subsp. lactis</name>
    <name type="common">Streptococcus lactis</name>
    <dbReference type="NCBI Taxonomy" id="1360"/>
    <lineage>
        <taxon>Bacteria</taxon>
        <taxon>Bacillati</taxon>
        <taxon>Bacillota</taxon>
        <taxon>Bacilli</taxon>
        <taxon>Lactobacillales</taxon>
        <taxon>Streptococcaceae</taxon>
        <taxon>Lactococcus</taxon>
    </lineage>
</organism>
<reference key="1">
    <citation type="journal article" date="1995" name="J. Biol. Chem.">
        <title>Cloning, expression, sequence analysis, and site-directed mutagenesis of the Tn5306-encoded N(5)-(carboxyethyl)ornithine synthase from Lactococcus lactis K1.</title>
        <authorList>
            <person name="Donkersloot J.A."/>
            <person name="Thompson J."/>
        </authorList>
    </citation>
    <scope>NUCLEOTIDE SEQUENCE [GENOMIC DNA]</scope>
    <scope>MUTAGENESIS OF ARG-15</scope>
    <source>
        <strain>K1-23</strain>
        <transposon>Tn5306</transposon>
    </source>
</reference>
<reference key="2">
    <citation type="journal article" date="1989" name="J. Biol. Chem.">
        <title>N(5)-(L-1-carboxyethyl)-L-ornithine:NADP(+) oxidoreductase from Streptococcus lactis. Purification and partial characterization.</title>
        <authorList>
            <person name="Thompson J."/>
        </authorList>
    </citation>
    <scope>PROTEIN SEQUENCE OF 1-37</scope>
    <scope>FUNCTION</scope>
    <scope>CATALYTIC ACTIVITY</scope>
    <scope>SUBSTRATE SPECIFICITY</scope>
    <scope>ACTIVITY REGULATION</scope>
    <scope>BIOPHYSICOCHEMICAL PROPERTIES</scope>
    <source>
        <strain>K1</strain>
    </source>
</reference>
<reference key="3">
    <citation type="journal article" date="1999" name="Protein Sci.">
        <title>N(5)-(L-1-carboxyethyl)-L-ornithine synthase: physical and spectral characterization of the enzyme and its unusual low pKa fluorescent tyrosine residues.</title>
        <authorList>
            <person name="Sackett D.L."/>
            <person name="Ruvinov S.B."/>
            <person name="Thompson J."/>
        </authorList>
    </citation>
    <scope>PROTEIN SEQUENCE OF 256-263</scope>
    <scope>SUBUNIT</scope>
    <scope>MASS SPECTROMETRY</scope>
    <source>
        <strain>K1</strain>
    </source>
</reference>
<reference key="4">
    <citation type="journal article" date="1999" name="Arch. Biochem. Biophys.">
        <title>Tetrameric N(5)-(L-1-carboxyethyl)-L-ornithine synthase: guanidine. HCl-induced unfolding and a low temperature requirement for refolding.</title>
        <authorList>
            <person name="Ruvinov S.B."/>
            <person name="Thompson J."/>
            <person name="Sackett D.L."/>
            <person name="Ginsburg A."/>
        </authorList>
    </citation>
    <scope>FOLDING STUDIES</scope>
    <source>
        <strain>K1</strain>
    </source>
</reference>